<comment type="function">
    <text evidence="1">One of several proteins that assist in the late maturation steps of the functional core of the 30S ribosomal subunit. Helps release RbfA from mature subunits. May play a role in the assembly of ribosomal proteins into the subunit. Circularly permuted GTPase that catalyzes slow GTP hydrolysis, GTPase activity is stimulated by the 30S ribosomal subunit.</text>
</comment>
<comment type="cofactor">
    <cofactor evidence="1">
        <name>Zn(2+)</name>
        <dbReference type="ChEBI" id="CHEBI:29105"/>
    </cofactor>
    <text evidence="1">Binds 1 zinc ion per subunit.</text>
</comment>
<comment type="subunit">
    <text evidence="1">Monomer. Associates with 30S ribosomal subunit, binds 16S rRNA.</text>
</comment>
<comment type="subcellular location">
    <subcellularLocation>
        <location evidence="1">Cytoplasm</location>
    </subcellularLocation>
</comment>
<comment type="similarity">
    <text evidence="1">Belongs to the TRAFAC class YlqF/YawG GTPase family. RsgA subfamily.</text>
</comment>
<name>RSGA_HISS1</name>
<sequence length="350" mass="39499">MSKRKLTQNQQRRIQSNNAKTLHRHQHRHKSDIDWQDDMLGDFQDGTVVTRYAVHADVENEQGEIVRCNLRRTLKSVVVGDRVVWRKGKEQLQGVRGVIEAVQPRHNQIVRPDYYDGLKSIAANIDRIIIVSAVLPNLSLNIIDRYLVVCESSNIPAVIVVNKADLLSSEARTEVSLQLEIYQKIGYETLLISAKSGENMDKLTALLSEGTSIFVGQSGVGKSSLINYILPEVNAQTGKLSQVSGLGQHTTTSSRLYHLSQGGNLIDSPGIREFGLWHLDREQITNGYREFQYFLGTCKFRDCKHLHDPGCAIQLAVKEGKIDPLRFENYHRLITSLSETKSQRHFISAN</sequence>
<organism>
    <name type="scientific">Histophilus somni (strain 129Pt)</name>
    <name type="common">Haemophilus somnus</name>
    <dbReference type="NCBI Taxonomy" id="205914"/>
    <lineage>
        <taxon>Bacteria</taxon>
        <taxon>Pseudomonadati</taxon>
        <taxon>Pseudomonadota</taxon>
        <taxon>Gammaproteobacteria</taxon>
        <taxon>Pasteurellales</taxon>
        <taxon>Pasteurellaceae</taxon>
        <taxon>Histophilus</taxon>
    </lineage>
</organism>
<keyword id="KW-0963">Cytoplasm</keyword>
<keyword id="KW-0342">GTP-binding</keyword>
<keyword id="KW-0378">Hydrolase</keyword>
<keyword id="KW-0479">Metal-binding</keyword>
<keyword id="KW-0547">Nucleotide-binding</keyword>
<keyword id="KW-0690">Ribosome biogenesis</keyword>
<keyword id="KW-0694">RNA-binding</keyword>
<keyword id="KW-0699">rRNA-binding</keyword>
<keyword id="KW-0862">Zinc</keyword>
<evidence type="ECO:0000255" key="1">
    <source>
        <dbReference type="HAMAP-Rule" id="MF_01820"/>
    </source>
</evidence>
<evidence type="ECO:0000255" key="2">
    <source>
        <dbReference type="PROSITE-ProRule" id="PRU01058"/>
    </source>
</evidence>
<evidence type="ECO:0000256" key="3">
    <source>
        <dbReference type="SAM" id="MobiDB-lite"/>
    </source>
</evidence>
<proteinExistence type="inferred from homology"/>
<feature type="chain" id="PRO_1000188085" description="Small ribosomal subunit biogenesis GTPase RsgA">
    <location>
        <begin position="1"/>
        <end position="350"/>
    </location>
</feature>
<feature type="domain" description="CP-type G" evidence="2">
    <location>
        <begin position="106"/>
        <end position="274"/>
    </location>
</feature>
<feature type="region of interest" description="Disordered" evidence="3">
    <location>
        <begin position="1"/>
        <end position="30"/>
    </location>
</feature>
<feature type="compositionally biased region" description="Polar residues" evidence="3">
    <location>
        <begin position="7"/>
        <end position="20"/>
    </location>
</feature>
<feature type="compositionally biased region" description="Basic residues" evidence="3">
    <location>
        <begin position="21"/>
        <end position="30"/>
    </location>
</feature>
<feature type="binding site" evidence="1">
    <location>
        <begin position="162"/>
        <end position="165"/>
    </location>
    <ligand>
        <name>GTP</name>
        <dbReference type="ChEBI" id="CHEBI:37565"/>
    </ligand>
</feature>
<feature type="binding site" evidence="1">
    <location>
        <begin position="216"/>
        <end position="224"/>
    </location>
    <ligand>
        <name>GTP</name>
        <dbReference type="ChEBI" id="CHEBI:37565"/>
    </ligand>
</feature>
<feature type="binding site" evidence="1">
    <location>
        <position position="298"/>
    </location>
    <ligand>
        <name>Zn(2+)</name>
        <dbReference type="ChEBI" id="CHEBI:29105"/>
    </ligand>
</feature>
<feature type="binding site" evidence="1">
    <location>
        <position position="303"/>
    </location>
    <ligand>
        <name>Zn(2+)</name>
        <dbReference type="ChEBI" id="CHEBI:29105"/>
    </ligand>
</feature>
<feature type="binding site" evidence="1">
    <location>
        <position position="305"/>
    </location>
    <ligand>
        <name>Zn(2+)</name>
        <dbReference type="ChEBI" id="CHEBI:29105"/>
    </ligand>
</feature>
<feature type="binding site" evidence="1">
    <location>
        <position position="311"/>
    </location>
    <ligand>
        <name>Zn(2+)</name>
        <dbReference type="ChEBI" id="CHEBI:29105"/>
    </ligand>
</feature>
<protein>
    <recommendedName>
        <fullName evidence="1">Small ribosomal subunit biogenesis GTPase RsgA</fullName>
        <ecNumber evidence="1">3.6.1.-</ecNumber>
    </recommendedName>
</protein>
<dbReference type="EC" id="3.6.1.-" evidence="1"/>
<dbReference type="EMBL" id="CP000436">
    <property type="protein sequence ID" value="ABI25374.1"/>
    <property type="molecule type" value="Genomic_DNA"/>
</dbReference>
<dbReference type="SMR" id="Q0I447"/>
<dbReference type="KEGG" id="hso:HS_1099"/>
<dbReference type="eggNOG" id="COG1162">
    <property type="taxonomic scope" value="Bacteria"/>
</dbReference>
<dbReference type="HOGENOM" id="CLU_033617_2_0_6"/>
<dbReference type="GO" id="GO:0005737">
    <property type="term" value="C:cytoplasm"/>
    <property type="evidence" value="ECO:0007669"/>
    <property type="project" value="UniProtKB-SubCell"/>
</dbReference>
<dbReference type="GO" id="GO:0005525">
    <property type="term" value="F:GTP binding"/>
    <property type="evidence" value="ECO:0007669"/>
    <property type="project" value="UniProtKB-UniRule"/>
</dbReference>
<dbReference type="GO" id="GO:0003924">
    <property type="term" value="F:GTPase activity"/>
    <property type="evidence" value="ECO:0007669"/>
    <property type="project" value="UniProtKB-UniRule"/>
</dbReference>
<dbReference type="GO" id="GO:0046872">
    <property type="term" value="F:metal ion binding"/>
    <property type="evidence" value="ECO:0007669"/>
    <property type="project" value="UniProtKB-KW"/>
</dbReference>
<dbReference type="GO" id="GO:0019843">
    <property type="term" value="F:rRNA binding"/>
    <property type="evidence" value="ECO:0007669"/>
    <property type="project" value="UniProtKB-KW"/>
</dbReference>
<dbReference type="GO" id="GO:0042274">
    <property type="term" value="P:ribosomal small subunit biogenesis"/>
    <property type="evidence" value="ECO:0007669"/>
    <property type="project" value="UniProtKB-UniRule"/>
</dbReference>
<dbReference type="CDD" id="cd01854">
    <property type="entry name" value="YjeQ_EngC"/>
    <property type="match status" value="1"/>
</dbReference>
<dbReference type="Gene3D" id="2.40.50.140">
    <property type="entry name" value="Nucleic acid-binding proteins"/>
    <property type="match status" value="1"/>
</dbReference>
<dbReference type="Gene3D" id="3.40.50.300">
    <property type="entry name" value="P-loop containing nucleotide triphosphate hydrolases"/>
    <property type="match status" value="1"/>
</dbReference>
<dbReference type="Gene3D" id="1.10.40.50">
    <property type="entry name" value="Probable gtpase engc, domain 3"/>
    <property type="match status" value="1"/>
</dbReference>
<dbReference type="HAMAP" id="MF_01820">
    <property type="entry name" value="GTPase_RsgA"/>
    <property type="match status" value="1"/>
</dbReference>
<dbReference type="InterPro" id="IPR030378">
    <property type="entry name" value="G_CP_dom"/>
</dbReference>
<dbReference type="InterPro" id="IPR012340">
    <property type="entry name" value="NA-bd_OB-fold"/>
</dbReference>
<dbReference type="InterPro" id="IPR027417">
    <property type="entry name" value="P-loop_NTPase"/>
</dbReference>
<dbReference type="InterPro" id="IPR004881">
    <property type="entry name" value="Ribosome_biogen_GTPase_RsgA"/>
</dbReference>
<dbReference type="InterPro" id="IPR010914">
    <property type="entry name" value="RsgA_GTPase_dom"/>
</dbReference>
<dbReference type="NCBIfam" id="NF008931">
    <property type="entry name" value="PRK12288.1"/>
    <property type="match status" value="1"/>
</dbReference>
<dbReference type="NCBIfam" id="TIGR00157">
    <property type="entry name" value="ribosome small subunit-dependent GTPase A"/>
    <property type="match status" value="1"/>
</dbReference>
<dbReference type="PANTHER" id="PTHR32120">
    <property type="entry name" value="SMALL RIBOSOMAL SUBUNIT BIOGENESIS GTPASE RSGA"/>
    <property type="match status" value="1"/>
</dbReference>
<dbReference type="PANTHER" id="PTHR32120:SF11">
    <property type="entry name" value="SMALL RIBOSOMAL SUBUNIT BIOGENESIS GTPASE RSGA 1, MITOCHONDRIAL-RELATED"/>
    <property type="match status" value="1"/>
</dbReference>
<dbReference type="Pfam" id="PF03193">
    <property type="entry name" value="RsgA_GTPase"/>
    <property type="match status" value="1"/>
</dbReference>
<dbReference type="SUPFAM" id="SSF52540">
    <property type="entry name" value="P-loop containing nucleoside triphosphate hydrolases"/>
    <property type="match status" value="1"/>
</dbReference>
<dbReference type="PROSITE" id="PS50936">
    <property type="entry name" value="ENGC_GTPASE"/>
    <property type="match status" value="1"/>
</dbReference>
<dbReference type="PROSITE" id="PS51721">
    <property type="entry name" value="G_CP"/>
    <property type="match status" value="1"/>
</dbReference>
<gene>
    <name evidence="1" type="primary">rsgA</name>
    <name type="ordered locus">HS_1099</name>
</gene>
<reference key="1">
    <citation type="journal article" date="2007" name="J. Bacteriol.">
        <title>Complete genome sequence of Haemophilus somnus (Histophilus somni) strain 129Pt and comparison to Haemophilus ducreyi 35000HP and Haemophilus influenzae Rd.</title>
        <authorList>
            <person name="Challacombe J.F."/>
            <person name="Duncan A.J."/>
            <person name="Brettin T.S."/>
            <person name="Bruce D."/>
            <person name="Chertkov O."/>
            <person name="Detter J.C."/>
            <person name="Han C.S."/>
            <person name="Misra M."/>
            <person name="Richardson P."/>
            <person name="Tapia R."/>
            <person name="Thayer N."/>
            <person name="Xie G."/>
            <person name="Inzana T.J."/>
        </authorList>
    </citation>
    <scope>NUCLEOTIDE SEQUENCE [LARGE SCALE GENOMIC DNA]</scope>
    <source>
        <strain>129Pt</strain>
    </source>
</reference>
<accession>Q0I447</accession>